<accession>Q2YWU0</accession>
<feature type="chain" id="PRO_0000372163" description="Na(+)/H(+) antiporter subunit G1">
    <location>
        <begin position="1"/>
        <end position="118"/>
    </location>
</feature>
<feature type="transmembrane region" description="Helical" evidence="2">
    <location>
        <begin position="4"/>
        <end position="24"/>
    </location>
</feature>
<feature type="transmembrane region" description="Helical" evidence="2">
    <location>
        <begin position="38"/>
        <end position="58"/>
    </location>
</feature>
<feature type="transmembrane region" description="Helical" evidence="2">
    <location>
        <begin position="60"/>
        <end position="80"/>
    </location>
</feature>
<comment type="function">
    <text evidence="1">Mnh complex is a Na(+)/H(+) antiporter involved in Na(+) excretion.</text>
</comment>
<comment type="subunit">
    <text evidence="1">May form a heterooligomeric complex that consists of seven subunits: mnhA1, mnhB1, mnhC1, mnhD1, mnhE1, mnhF1 and mnhG1.</text>
</comment>
<comment type="subcellular location">
    <subcellularLocation>
        <location evidence="3">Cell membrane</location>
        <topology evidence="3">Multi-pass membrane protein</topology>
    </subcellularLocation>
</comment>
<comment type="similarity">
    <text evidence="3">Belongs to the CPA3 antiporters (TC 2.A.63) subunit G family.</text>
</comment>
<organism>
    <name type="scientific">Staphylococcus aureus (strain bovine RF122 / ET3-1)</name>
    <dbReference type="NCBI Taxonomy" id="273036"/>
    <lineage>
        <taxon>Bacteria</taxon>
        <taxon>Bacillati</taxon>
        <taxon>Bacillota</taxon>
        <taxon>Bacilli</taxon>
        <taxon>Bacillales</taxon>
        <taxon>Staphylococcaceae</taxon>
        <taxon>Staphylococcus</taxon>
    </lineage>
</organism>
<name>MNHG1_STAAB</name>
<gene>
    <name type="primary">mnhG1</name>
    <name type="ordered locus">SAB0813c</name>
</gene>
<sequence>MIKIILISLALIFVIIGALISALAAIGLLRLEDVYSRAHAAGKASTLGAMSLLFGTFLYFIATQGFVNMQLIVAIIFVLITGPLSSHMIMKAAYNIKTPYTKKTKVDEISEDLKDTKL</sequence>
<proteinExistence type="inferred from homology"/>
<dbReference type="EMBL" id="AJ938182">
    <property type="protein sequence ID" value="CAI80501.1"/>
    <property type="molecule type" value="Genomic_DNA"/>
</dbReference>
<dbReference type="RefSeq" id="WP_000590451.1">
    <property type="nucleotide sequence ID" value="NC_007622.1"/>
</dbReference>
<dbReference type="SMR" id="Q2YWU0"/>
<dbReference type="GeneID" id="98345267"/>
<dbReference type="KEGG" id="sab:SAB0813c"/>
<dbReference type="HOGENOM" id="CLU_121334_0_3_9"/>
<dbReference type="GO" id="GO:0005886">
    <property type="term" value="C:plasma membrane"/>
    <property type="evidence" value="ECO:0007669"/>
    <property type="project" value="UniProtKB-SubCell"/>
</dbReference>
<dbReference type="GO" id="GO:0015385">
    <property type="term" value="F:sodium:proton antiporter activity"/>
    <property type="evidence" value="ECO:0007669"/>
    <property type="project" value="TreeGrafter"/>
</dbReference>
<dbReference type="InterPro" id="IPR005133">
    <property type="entry name" value="PhaG_MnhG_YufB"/>
</dbReference>
<dbReference type="NCBIfam" id="TIGR01300">
    <property type="entry name" value="CPA3_mnhG_phaG"/>
    <property type="match status" value="1"/>
</dbReference>
<dbReference type="NCBIfam" id="NF009237">
    <property type="entry name" value="PRK12587.1"/>
    <property type="match status" value="1"/>
</dbReference>
<dbReference type="NCBIfam" id="NF009314">
    <property type="entry name" value="PRK12674.1-2"/>
    <property type="match status" value="1"/>
</dbReference>
<dbReference type="PANTHER" id="PTHR34703">
    <property type="entry name" value="ANTIPORTER SUBUNIT MNHG2-RELATED"/>
    <property type="match status" value="1"/>
</dbReference>
<dbReference type="PANTHER" id="PTHR34703:SF1">
    <property type="entry name" value="ANTIPORTER SUBUNIT MNHG2-RELATED"/>
    <property type="match status" value="1"/>
</dbReference>
<dbReference type="Pfam" id="PF03334">
    <property type="entry name" value="PhaG_MnhG_YufB"/>
    <property type="match status" value="1"/>
</dbReference>
<protein>
    <recommendedName>
        <fullName>Na(+)/H(+) antiporter subunit G1</fullName>
    </recommendedName>
    <alternativeName>
        <fullName>Mnh complex subunit G1</fullName>
    </alternativeName>
</protein>
<reference key="1">
    <citation type="journal article" date="2007" name="PLoS ONE">
        <title>Molecular correlates of host specialization in Staphylococcus aureus.</title>
        <authorList>
            <person name="Herron-Olson L."/>
            <person name="Fitzgerald J.R."/>
            <person name="Musser J.M."/>
            <person name="Kapur V."/>
        </authorList>
    </citation>
    <scope>NUCLEOTIDE SEQUENCE [LARGE SCALE GENOMIC DNA]</scope>
    <source>
        <strain>bovine RF122 / ET3-1</strain>
    </source>
</reference>
<keyword id="KW-0050">Antiport</keyword>
<keyword id="KW-1003">Cell membrane</keyword>
<keyword id="KW-0375">Hydrogen ion transport</keyword>
<keyword id="KW-0406">Ion transport</keyword>
<keyword id="KW-0472">Membrane</keyword>
<keyword id="KW-0915">Sodium</keyword>
<keyword id="KW-0739">Sodium transport</keyword>
<keyword id="KW-0812">Transmembrane</keyword>
<keyword id="KW-1133">Transmembrane helix</keyword>
<keyword id="KW-0813">Transport</keyword>
<evidence type="ECO:0000250" key="1"/>
<evidence type="ECO:0000255" key="2"/>
<evidence type="ECO:0000305" key="3"/>